<evidence type="ECO:0000255" key="1">
    <source>
        <dbReference type="HAMAP-Rule" id="MF_01345"/>
    </source>
</evidence>
<evidence type="ECO:0000305" key="2"/>
<protein>
    <recommendedName>
        <fullName evidence="1">Small ribosomal subunit protein uS17</fullName>
    </recommendedName>
    <alternativeName>
        <fullName evidence="2">30S ribosomal protein S17</fullName>
    </alternativeName>
</protein>
<comment type="function">
    <text evidence="1">One of the primary rRNA binding proteins, it binds specifically to the 5'-end of 16S ribosomal RNA.</text>
</comment>
<comment type="subunit">
    <text evidence="1">Part of the 30S ribosomal subunit.</text>
</comment>
<comment type="similarity">
    <text evidence="1">Belongs to the universal ribosomal protein uS17 family.</text>
</comment>
<reference key="1">
    <citation type="journal article" date="2004" name="J. Bacteriol.">
        <title>The genome sequence of Mycoplasma hyopneumoniae strain 232, the agent of swine mycoplasmosis.</title>
        <authorList>
            <person name="Minion F.C."/>
            <person name="Lefkowitz E.J."/>
            <person name="Madsen M.L."/>
            <person name="Cleary B.J."/>
            <person name="Swartzell S.M."/>
            <person name="Mahairas G.G."/>
        </authorList>
    </citation>
    <scope>NUCLEOTIDE SEQUENCE [LARGE SCALE GENOMIC DNA]</scope>
    <source>
        <strain>232</strain>
    </source>
</reference>
<sequence>MLKMNNLTLEKKAQTRNLRKTLQGIVIRTSPKTIMVEVETAYKHKLYAKRFKKRKKFNTHDEKNLAEVGDFVKIAECRPISKTKHFRLVEVLQKKGEI</sequence>
<accession>Q601K5</accession>
<organism>
    <name type="scientific">Mesomycoplasma hyopneumoniae (strain 232)</name>
    <name type="common">Mycoplasma hyopneumoniae</name>
    <dbReference type="NCBI Taxonomy" id="295358"/>
    <lineage>
        <taxon>Bacteria</taxon>
        <taxon>Bacillati</taxon>
        <taxon>Mycoplasmatota</taxon>
        <taxon>Mycoplasmoidales</taxon>
        <taxon>Metamycoplasmataceae</taxon>
        <taxon>Mesomycoplasma</taxon>
    </lineage>
</organism>
<feature type="chain" id="PRO_0000233508" description="Small ribosomal subunit protein uS17">
    <location>
        <begin position="1"/>
        <end position="98"/>
    </location>
</feature>
<name>RS17_MESH2</name>
<dbReference type="EMBL" id="AE017332">
    <property type="protein sequence ID" value="AAV27453.1"/>
    <property type="molecule type" value="Genomic_DNA"/>
</dbReference>
<dbReference type="SMR" id="Q601K5"/>
<dbReference type="KEGG" id="mhy:mhp197"/>
<dbReference type="eggNOG" id="COG0186">
    <property type="taxonomic scope" value="Bacteria"/>
</dbReference>
<dbReference type="HOGENOM" id="CLU_073626_1_0_14"/>
<dbReference type="PhylomeDB" id="Q601K5"/>
<dbReference type="Proteomes" id="UP000006822">
    <property type="component" value="Chromosome"/>
</dbReference>
<dbReference type="GO" id="GO:0022627">
    <property type="term" value="C:cytosolic small ribosomal subunit"/>
    <property type="evidence" value="ECO:0007669"/>
    <property type="project" value="TreeGrafter"/>
</dbReference>
<dbReference type="GO" id="GO:0019843">
    <property type="term" value="F:rRNA binding"/>
    <property type="evidence" value="ECO:0007669"/>
    <property type="project" value="UniProtKB-UniRule"/>
</dbReference>
<dbReference type="GO" id="GO:0003735">
    <property type="term" value="F:structural constituent of ribosome"/>
    <property type="evidence" value="ECO:0007669"/>
    <property type="project" value="InterPro"/>
</dbReference>
<dbReference type="GO" id="GO:0006412">
    <property type="term" value="P:translation"/>
    <property type="evidence" value="ECO:0007669"/>
    <property type="project" value="UniProtKB-UniRule"/>
</dbReference>
<dbReference type="CDD" id="cd00364">
    <property type="entry name" value="Ribosomal_uS17"/>
    <property type="match status" value="1"/>
</dbReference>
<dbReference type="Gene3D" id="2.40.50.140">
    <property type="entry name" value="Nucleic acid-binding proteins"/>
    <property type="match status" value="1"/>
</dbReference>
<dbReference type="HAMAP" id="MF_01345_B">
    <property type="entry name" value="Ribosomal_uS17_B"/>
    <property type="match status" value="1"/>
</dbReference>
<dbReference type="InterPro" id="IPR012340">
    <property type="entry name" value="NA-bd_OB-fold"/>
</dbReference>
<dbReference type="InterPro" id="IPR000266">
    <property type="entry name" value="Ribosomal_uS17"/>
</dbReference>
<dbReference type="InterPro" id="IPR019984">
    <property type="entry name" value="Ribosomal_uS17_bact/chlr"/>
</dbReference>
<dbReference type="InterPro" id="IPR019979">
    <property type="entry name" value="Ribosomal_uS17_CS"/>
</dbReference>
<dbReference type="NCBIfam" id="NF004123">
    <property type="entry name" value="PRK05610.1"/>
    <property type="match status" value="1"/>
</dbReference>
<dbReference type="NCBIfam" id="TIGR03635">
    <property type="entry name" value="uS17_bact"/>
    <property type="match status" value="1"/>
</dbReference>
<dbReference type="PANTHER" id="PTHR10744">
    <property type="entry name" value="40S RIBOSOMAL PROTEIN S11 FAMILY MEMBER"/>
    <property type="match status" value="1"/>
</dbReference>
<dbReference type="PANTHER" id="PTHR10744:SF1">
    <property type="entry name" value="SMALL RIBOSOMAL SUBUNIT PROTEIN US17M"/>
    <property type="match status" value="1"/>
</dbReference>
<dbReference type="Pfam" id="PF00366">
    <property type="entry name" value="Ribosomal_S17"/>
    <property type="match status" value="1"/>
</dbReference>
<dbReference type="PRINTS" id="PR00973">
    <property type="entry name" value="RIBOSOMALS17"/>
</dbReference>
<dbReference type="SUPFAM" id="SSF50249">
    <property type="entry name" value="Nucleic acid-binding proteins"/>
    <property type="match status" value="1"/>
</dbReference>
<dbReference type="PROSITE" id="PS00056">
    <property type="entry name" value="RIBOSOMAL_S17"/>
    <property type="match status" value="1"/>
</dbReference>
<proteinExistence type="inferred from homology"/>
<gene>
    <name evidence="1" type="primary">rpsQ</name>
    <name type="ordered locus">mhp197</name>
</gene>
<keyword id="KW-0687">Ribonucleoprotein</keyword>
<keyword id="KW-0689">Ribosomal protein</keyword>
<keyword id="KW-0694">RNA-binding</keyword>
<keyword id="KW-0699">rRNA-binding</keyword>